<sequence length="226" mass="25352">MKSATRSATTAFFIPQETGAIRPIGGISKRSFDVLIAILALIALSPLFLLVMGLVKFSDGGSIFYGHRRIGHNGQTFKCLKFRTMMENGDRVLQEFFKSNPAAYEEWRTTRKLQDDPRVTVVGSVLRKLSLDELPQLLNIIRGEMSIVGPRPVVEDELELYDSAAEFYLRSRPGLTGLWQISGRNDVSYATRVAFDTHYVQNWSLLADLVIVFKTIPAVCLSRGSY</sequence>
<feature type="chain" id="PRO_0000166466" description="Exopolysaccharide production protein ExoY">
    <location>
        <begin position="1"/>
        <end position="226"/>
    </location>
</feature>
<feature type="transmembrane region" description="Helical" evidence="1">
    <location>
        <begin position="34"/>
        <end position="54"/>
    </location>
</feature>
<dbReference type="EMBL" id="X16704">
    <property type="protein sequence ID" value="CAA34676.1"/>
    <property type="molecule type" value="Genomic_DNA"/>
</dbReference>
<dbReference type="EMBL" id="AY316746">
    <property type="protein sequence ID" value="AAQ87043.1"/>
    <property type="molecule type" value="Genomic_DNA"/>
</dbReference>
<dbReference type="EMBL" id="CP000874">
    <property type="protein sequence ID" value="ACP23277.1"/>
    <property type="molecule type" value="Genomic_DNA"/>
</dbReference>
<dbReference type="RefSeq" id="WP_015887900.1">
    <property type="nucleotide sequence ID" value="NC_012586.1"/>
</dbReference>
<dbReference type="RefSeq" id="YP_002824030.1">
    <property type="nucleotide sequence ID" value="NC_012586.1"/>
</dbReference>
<dbReference type="SMR" id="P14186"/>
<dbReference type="KEGG" id="rhi:NGR_b18270"/>
<dbReference type="PATRIC" id="fig|394.7.peg.2244"/>
<dbReference type="HOGENOM" id="CLU_024920_1_0_5"/>
<dbReference type="OrthoDB" id="9808602at2"/>
<dbReference type="UniPathway" id="UPA00631"/>
<dbReference type="Proteomes" id="UP000001054">
    <property type="component" value="Plasmid pNGR234b"/>
</dbReference>
<dbReference type="GO" id="GO:0005886">
    <property type="term" value="C:plasma membrane"/>
    <property type="evidence" value="ECO:0007669"/>
    <property type="project" value="UniProtKB-SubCell"/>
</dbReference>
<dbReference type="GO" id="GO:0016780">
    <property type="term" value="F:phosphotransferase activity, for other substituted phosphate groups"/>
    <property type="evidence" value="ECO:0007669"/>
    <property type="project" value="TreeGrafter"/>
</dbReference>
<dbReference type="GO" id="GO:0000271">
    <property type="term" value="P:polysaccharide biosynthetic process"/>
    <property type="evidence" value="ECO:0007669"/>
    <property type="project" value="UniProtKB-KW"/>
</dbReference>
<dbReference type="InterPro" id="IPR003362">
    <property type="entry name" value="Bact_transf"/>
</dbReference>
<dbReference type="PANTHER" id="PTHR30576">
    <property type="entry name" value="COLANIC BIOSYNTHESIS UDP-GLUCOSE LIPID CARRIER TRANSFERASE"/>
    <property type="match status" value="1"/>
</dbReference>
<dbReference type="PANTHER" id="PTHR30576:SF4">
    <property type="entry name" value="UNDECAPRENYL-PHOSPHATE GALACTOSE PHOSPHOTRANSFERASE"/>
    <property type="match status" value="1"/>
</dbReference>
<dbReference type="Pfam" id="PF02397">
    <property type="entry name" value="Bac_transf"/>
    <property type="match status" value="1"/>
</dbReference>
<reference key="1">
    <citation type="journal article" date="1990" name="J. Bacteriol.">
        <title>Two genes that regulate exopolysaccharide production in Rhizobium sp. strain NGR234: DNA sequences and resultant phenotypes.</title>
        <authorList>
            <person name="Gray J.X."/>
            <person name="Djordjevic M.A."/>
            <person name="Rolfe B.G."/>
        </authorList>
    </citation>
    <scope>NUCLEOTIDE SEQUENCE [GENOMIC DNA]</scope>
</reference>
<reference key="2">
    <citation type="journal article" date="2004" name="J. Bacteriol.">
        <title>An evolutionary hot spot: the pNGR234b replicon of Rhizobium sp. strain NGR234.</title>
        <authorList>
            <person name="Streit W.R."/>
            <person name="Schmitz R.A."/>
            <person name="Perret X."/>
            <person name="Staehelin C."/>
            <person name="Deakin W.J."/>
            <person name="Raasch C."/>
            <person name="Liesegang H."/>
            <person name="Broughton W.J."/>
        </authorList>
    </citation>
    <scope>NUCLEOTIDE SEQUENCE [LARGE SCALE GENOMIC DNA]</scope>
    <source>
        <strain>NBRC 101917 / NGR234</strain>
    </source>
</reference>
<reference key="3">
    <citation type="journal article" date="2009" name="Appl. Environ. Microbiol.">
        <title>Rhizobium sp. strain NGR234 possesses a remarkable number of secretion systems.</title>
        <authorList>
            <person name="Schmeisser C."/>
            <person name="Liesegang H."/>
            <person name="Krysciak D."/>
            <person name="Bakkou N."/>
            <person name="Le Quere A."/>
            <person name="Wollherr A."/>
            <person name="Heinemeyer I."/>
            <person name="Morgenstern B."/>
            <person name="Pommerening-Roeser A."/>
            <person name="Flores M."/>
            <person name="Palacios R."/>
            <person name="Brenner S."/>
            <person name="Gottschalk G."/>
            <person name="Schmitz R.A."/>
            <person name="Broughton W.J."/>
            <person name="Perret X."/>
            <person name="Strittmatter A.W."/>
            <person name="Streit W.R."/>
        </authorList>
    </citation>
    <scope>NUCLEOTIDE SEQUENCE [LARGE SCALE GENOMIC DNA]</scope>
    <source>
        <strain>NBRC 101917 / NGR234</strain>
    </source>
</reference>
<gene>
    <name type="primary">exoY</name>
    <name type="ordered locus">NGR_b18270</name>
    <name type="ORF">RNGR00016</name>
</gene>
<accession>P14186</accession>
<accession>Q6W2H4</accession>
<name>EXOY_SINFN</name>
<protein>
    <recommendedName>
        <fullName>Exopolysaccharide production protein ExoY</fullName>
    </recommendedName>
</protein>
<comment type="function">
    <text>Needed for the addition of the first sugar (galactose) to the isoprenoid carrier. May function as a sugar transferase.</text>
</comment>
<comment type="pathway">
    <text>Glycan metabolism; exopolysaccharide biosynthesis.</text>
</comment>
<comment type="subcellular location">
    <subcellularLocation>
        <location>Cell membrane</location>
        <topology>Single-pass membrane protein</topology>
    </subcellularLocation>
</comment>
<comment type="similarity">
    <text evidence="2">Belongs to the bacterial sugar transferase family.</text>
</comment>
<keyword id="KW-1003">Cell membrane</keyword>
<keyword id="KW-0270">Exopolysaccharide synthesis</keyword>
<keyword id="KW-0472">Membrane</keyword>
<keyword id="KW-0614">Plasmid</keyword>
<keyword id="KW-1185">Reference proteome</keyword>
<keyword id="KW-0808">Transferase</keyword>
<keyword id="KW-0812">Transmembrane</keyword>
<keyword id="KW-1133">Transmembrane helix</keyword>
<geneLocation type="plasmid">
    <name>sym pNGR234b</name>
</geneLocation>
<organism>
    <name type="scientific">Sinorhizobium fredii (strain NBRC 101917 / NGR234)</name>
    <dbReference type="NCBI Taxonomy" id="394"/>
    <lineage>
        <taxon>Bacteria</taxon>
        <taxon>Pseudomonadati</taxon>
        <taxon>Pseudomonadota</taxon>
        <taxon>Alphaproteobacteria</taxon>
        <taxon>Hyphomicrobiales</taxon>
        <taxon>Rhizobiaceae</taxon>
        <taxon>Sinorhizobium/Ensifer group</taxon>
        <taxon>Sinorhizobium</taxon>
    </lineage>
</organism>
<proteinExistence type="inferred from homology"/>
<evidence type="ECO:0000255" key="1"/>
<evidence type="ECO:0000305" key="2"/>